<sequence length="443" mass="46944">MPKIFRSLYVQVIIAIVLGILVGALFPKFGEALKPLGDIFVKLIKMVIAPIIFATVVSGVAHMRDTRKVGRVGGKALIYFEVVSTLALIIGMVVMNVLRPGAGMNVDPATLDTAGLTKYTEAAGEMTVWDHILKIIPDTLVSAFTGGELLPVLLVALLFGFALMRLGKLGDQILYGIDALNQVVFVILGFIMRLAPIGAFGAMAFTVGKYGLKSLTSLGYLMGSFYLTCLLFIFVVLGLIARAAGFSIFKLIRYIREELLIVLGTSSSESALPRLMMKLEHAGAEKSVVGLVVPTGYSFNLDGTSIYLTMAALFIAQATNTPLGLGEQLSLLAVLLLTSKGAAGVTGSGFITLAATLGAVGHVPVAGMALILGIDRFMSEARALTNFIGNAVATLVVARSENAVDMNRLTRALNGEDLPTTEPDVASEERGEGREIDSSRPVT</sequence>
<evidence type="ECO:0000250" key="1"/>
<evidence type="ECO:0000255" key="2"/>
<evidence type="ECO:0000256" key="3">
    <source>
        <dbReference type="SAM" id="MobiDB-lite"/>
    </source>
</evidence>
<evidence type="ECO:0000305" key="4"/>
<comment type="function">
    <text evidence="1">Responsible for the transport of dicarboxylates such as succinate, fumarate, and malate across the membrane.</text>
</comment>
<comment type="subcellular location">
    <subcellularLocation>
        <location evidence="1">Cell membrane</location>
        <topology evidence="1">Multi-pass membrane protein</topology>
    </subcellularLocation>
</comment>
<comment type="similarity">
    <text evidence="4">Belongs to the dicarboxylate/amino acid:cation symporter (DAACS) (TC 2.A.23) family.</text>
</comment>
<comment type="sequence caution" evidence="4">
    <conflict type="erroneous initiation">
        <sequence resource="EMBL-CDS" id="AAF12066"/>
    </conflict>
</comment>
<dbReference type="EMBL" id="AE000513">
    <property type="protein sequence ID" value="AAF12066.1"/>
    <property type="status" value="ALT_INIT"/>
    <property type="molecule type" value="Genomic_DNA"/>
</dbReference>
<dbReference type="PIR" id="D75262">
    <property type="entry name" value="D75262"/>
</dbReference>
<dbReference type="RefSeq" id="NP_296245.1">
    <property type="nucleotide sequence ID" value="NC_001263.1"/>
</dbReference>
<dbReference type="RefSeq" id="WP_027480112.1">
    <property type="nucleotide sequence ID" value="NC_001263.1"/>
</dbReference>
<dbReference type="SMR" id="Q9RRG7"/>
<dbReference type="FunCoup" id="Q9RRG7">
    <property type="interactions" value="61"/>
</dbReference>
<dbReference type="STRING" id="243230.DR_2525"/>
<dbReference type="PaxDb" id="243230-DR_2525"/>
<dbReference type="EnsemblBacteria" id="AAF12066">
    <property type="protein sequence ID" value="AAF12066"/>
    <property type="gene ID" value="DR_2525"/>
</dbReference>
<dbReference type="GeneID" id="69518778"/>
<dbReference type="KEGG" id="dra:DR_2525"/>
<dbReference type="PATRIC" id="fig|243230.17.peg.2767"/>
<dbReference type="eggNOG" id="COG1301">
    <property type="taxonomic scope" value="Bacteria"/>
</dbReference>
<dbReference type="HOGENOM" id="CLU_019375_7_0_0"/>
<dbReference type="InParanoid" id="Q9RRG7"/>
<dbReference type="OrthoDB" id="7778689at2"/>
<dbReference type="Proteomes" id="UP000002524">
    <property type="component" value="Chromosome 1"/>
</dbReference>
<dbReference type="GO" id="GO:0005886">
    <property type="term" value="C:plasma membrane"/>
    <property type="evidence" value="ECO:0000318"/>
    <property type="project" value="GO_Central"/>
</dbReference>
<dbReference type="GO" id="GO:0015138">
    <property type="term" value="F:fumarate transmembrane transporter activity"/>
    <property type="evidence" value="ECO:0000318"/>
    <property type="project" value="GO_Central"/>
</dbReference>
<dbReference type="GO" id="GO:0015366">
    <property type="term" value="F:malate:proton symporter activity"/>
    <property type="evidence" value="ECO:0000318"/>
    <property type="project" value="GO_Central"/>
</dbReference>
<dbReference type="GO" id="GO:0015141">
    <property type="term" value="F:succinate transmembrane transporter activity"/>
    <property type="evidence" value="ECO:0000318"/>
    <property type="project" value="GO_Central"/>
</dbReference>
<dbReference type="GO" id="GO:0070778">
    <property type="term" value="P:L-aspartate transmembrane transport"/>
    <property type="evidence" value="ECO:0000318"/>
    <property type="project" value="GO_Central"/>
</dbReference>
<dbReference type="FunFam" id="1.10.3860.10:FF:000001">
    <property type="entry name" value="C4-dicarboxylate transport protein"/>
    <property type="match status" value="1"/>
</dbReference>
<dbReference type="Gene3D" id="1.10.3860.10">
    <property type="entry name" value="Sodium:dicarboxylate symporter"/>
    <property type="match status" value="1"/>
</dbReference>
<dbReference type="HAMAP" id="MF_01300">
    <property type="entry name" value="C4_dicarb_transport"/>
    <property type="match status" value="1"/>
</dbReference>
<dbReference type="InterPro" id="IPR023954">
    <property type="entry name" value="C4_dicarb_transport"/>
</dbReference>
<dbReference type="InterPro" id="IPR001991">
    <property type="entry name" value="Na-dicarboxylate_symporter"/>
</dbReference>
<dbReference type="InterPro" id="IPR018107">
    <property type="entry name" value="Na-dicarboxylate_symporter_CS"/>
</dbReference>
<dbReference type="InterPro" id="IPR036458">
    <property type="entry name" value="Na:dicarbo_symporter_sf"/>
</dbReference>
<dbReference type="NCBIfam" id="NF002461">
    <property type="entry name" value="PRK01663.1"/>
    <property type="match status" value="1"/>
</dbReference>
<dbReference type="NCBIfam" id="NF009587">
    <property type="entry name" value="PRK13027.1"/>
    <property type="match status" value="1"/>
</dbReference>
<dbReference type="PANTHER" id="PTHR42865:SF1">
    <property type="entry name" value="AEROBIC C4-DICARBOXYLATE TRANSPORT PROTEIN"/>
    <property type="match status" value="1"/>
</dbReference>
<dbReference type="PANTHER" id="PTHR42865">
    <property type="entry name" value="PROTON/GLUTAMATE-ASPARTATE SYMPORTER"/>
    <property type="match status" value="1"/>
</dbReference>
<dbReference type="Pfam" id="PF00375">
    <property type="entry name" value="SDF"/>
    <property type="match status" value="1"/>
</dbReference>
<dbReference type="PRINTS" id="PR00173">
    <property type="entry name" value="EDTRNSPORT"/>
</dbReference>
<dbReference type="SUPFAM" id="SSF118215">
    <property type="entry name" value="Proton glutamate symport protein"/>
    <property type="match status" value="1"/>
</dbReference>
<dbReference type="PROSITE" id="PS00713">
    <property type="entry name" value="NA_DICARBOXYL_SYMP_1"/>
    <property type="match status" value="1"/>
</dbReference>
<dbReference type="PROSITE" id="PS00714">
    <property type="entry name" value="NA_DICARBOXYL_SYMP_2"/>
    <property type="match status" value="1"/>
</dbReference>
<organism>
    <name type="scientific">Deinococcus radiodurans (strain ATCC 13939 / DSM 20539 / JCM 16871 / CCUG 27074 / LMG 4051 / NBRC 15346 / NCIMB 9279 / VKM B-1422 / R1)</name>
    <dbReference type="NCBI Taxonomy" id="243230"/>
    <lineage>
        <taxon>Bacteria</taxon>
        <taxon>Thermotogati</taxon>
        <taxon>Deinococcota</taxon>
        <taxon>Deinococci</taxon>
        <taxon>Deinococcales</taxon>
        <taxon>Deinococcaceae</taxon>
        <taxon>Deinococcus</taxon>
    </lineage>
</organism>
<name>DCTA_DEIRA</name>
<proteinExistence type="inferred from homology"/>
<protein>
    <recommendedName>
        <fullName>C4-dicarboxylate transport protein</fullName>
    </recommendedName>
</protein>
<reference key="1">
    <citation type="journal article" date="1999" name="Science">
        <title>Genome sequence of the radioresistant bacterium Deinococcus radiodurans R1.</title>
        <authorList>
            <person name="White O."/>
            <person name="Eisen J.A."/>
            <person name="Heidelberg J.F."/>
            <person name="Hickey E.K."/>
            <person name="Peterson J.D."/>
            <person name="Dodson R.J."/>
            <person name="Haft D.H."/>
            <person name="Gwinn M.L."/>
            <person name="Nelson W.C."/>
            <person name="Richardson D.L."/>
            <person name="Moffat K.S."/>
            <person name="Qin H."/>
            <person name="Jiang L."/>
            <person name="Pamphile W."/>
            <person name="Crosby M."/>
            <person name="Shen M."/>
            <person name="Vamathevan J.J."/>
            <person name="Lam P."/>
            <person name="McDonald L.A."/>
            <person name="Utterback T.R."/>
            <person name="Zalewski C."/>
            <person name="Makarova K.S."/>
            <person name="Aravind L."/>
            <person name="Daly M.J."/>
            <person name="Minton K.W."/>
            <person name="Fleischmann R.D."/>
            <person name="Ketchum K.A."/>
            <person name="Nelson K.E."/>
            <person name="Salzberg S.L."/>
            <person name="Smith H.O."/>
            <person name="Venter J.C."/>
            <person name="Fraser C.M."/>
        </authorList>
    </citation>
    <scope>NUCLEOTIDE SEQUENCE [LARGE SCALE GENOMIC DNA]</scope>
    <source>
        <strain>ATCC 13939 / DSM 20539 / JCM 16871 / CCUG 27074 / LMG 4051 / NBRC 15346 / NCIMB 9279 / VKM B-1422 / R1</strain>
    </source>
</reference>
<keyword id="KW-1003">Cell membrane</keyword>
<keyword id="KW-0472">Membrane</keyword>
<keyword id="KW-1185">Reference proteome</keyword>
<keyword id="KW-0769">Symport</keyword>
<keyword id="KW-0812">Transmembrane</keyword>
<keyword id="KW-1133">Transmembrane helix</keyword>
<keyword id="KW-0813">Transport</keyword>
<gene>
    <name type="primary">dctA</name>
    <name type="ordered locus">DR_2525</name>
</gene>
<feature type="chain" id="PRO_0000202093" description="C4-dicarboxylate transport protein">
    <location>
        <begin position="1"/>
        <end position="443"/>
    </location>
</feature>
<feature type="transmembrane region" description="Helical" evidence="2">
    <location>
        <begin position="7"/>
        <end position="26"/>
    </location>
</feature>
<feature type="transmembrane region" description="Helical" evidence="2">
    <location>
        <begin position="46"/>
        <end position="63"/>
    </location>
</feature>
<feature type="transmembrane region" description="Helical" evidence="2">
    <location>
        <begin position="76"/>
        <end position="98"/>
    </location>
</feature>
<feature type="transmembrane region" description="Helical" evidence="2">
    <location>
        <begin position="140"/>
        <end position="162"/>
    </location>
</feature>
<feature type="transmembrane region" description="Helical" evidence="2">
    <location>
        <begin position="183"/>
        <end position="205"/>
    </location>
</feature>
<feature type="transmembrane region" description="Helical" evidence="2">
    <location>
        <begin position="218"/>
        <end position="240"/>
    </location>
</feature>
<feature type="transmembrane region" description="Helical" evidence="2">
    <location>
        <begin position="350"/>
        <end position="372"/>
    </location>
</feature>
<feature type="region of interest" description="Disordered" evidence="3">
    <location>
        <begin position="415"/>
        <end position="443"/>
    </location>
</feature>
<feature type="compositionally biased region" description="Basic and acidic residues" evidence="3">
    <location>
        <begin position="427"/>
        <end position="443"/>
    </location>
</feature>
<accession>Q9RRG7</accession>